<sequence>MILQAGTPETSLLRVLFLGLSTLAAFSRAQMELHVPPGLNKLEAVEGEEVVLPAWYTMAREESWSHPREVPILIWFLEQEGKEPNQVLSYINGVMTNKPGTALVHSISSRNVSLRLGALQEGDSGTYRCSVNVQNDEGKSIGHSIKSIELKVLVPPAPPSCSLQGVPYVGTNVTLNCKSPRSKPTAQYQWERLAPSSQVFFGPALDAVRGSLKLTNLSIAMSGVYVCKAQNRVGFAKCNVTLDVMTGSKAAVVAGAVVGTFVGLVLIAGLVLLYQRRSKTLEELANDIKEDAIAPRTLPWTKGSDTISKNGTLSSVTSARALRPPKAAPPRPGTFTPTPSVSSQALSSPRLPRVDEPPPQAVSLTPGGVSSSALSRMGAVPVMVPAQSQAGSLV</sequence>
<protein>
    <recommendedName>
        <fullName>Endothelial cell-selective adhesion molecule</fullName>
    </recommendedName>
</protein>
<dbReference type="EMBL" id="AF361882">
    <property type="protein sequence ID" value="AAK51504.1"/>
    <property type="molecule type" value="mRNA"/>
</dbReference>
<dbReference type="EMBL" id="BC049249">
    <property type="protein sequence ID" value="AAH49249.1"/>
    <property type="molecule type" value="mRNA"/>
</dbReference>
<dbReference type="CCDS" id="CCDS22979.1"/>
<dbReference type="RefSeq" id="NP_081378.1">
    <property type="nucleotide sequence ID" value="NM_027102.3"/>
</dbReference>
<dbReference type="SMR" id="Q925F2"/>
<dbReference type="BioGRID" id="213501">
    <property type="interactions" value="1"/>
</dbReference>
<dbReference type="FunCoup" id="Q925F2">
    <property type="interactions" value="427"/>
</dbReference>
<dbReference type="STRING" id="10090.ENSMUSP00000002011"/>
<dbReference type="GlyConnect" id="2288">
    <property type="glycosylation" value="1 N-Linked glycan (1 site)"/>
</dbReference>
<dbReference type="GlyCosmos" id="Q925F2">
    <property type="glycosylation" value="4 sites, 1 glycan"/>
</dbReference>
<dbReference type="GlyGen" id="Q925F2">
    <property type="glycosylation" value="6 sites, 4 N-linked glycans (4 sites)"/>
</dbReference>
<dbReference type="iPTMnet" id="Q925F2"/>
<dbReference type="PhosphoSitePlus" id="Q925F2"/>
<dbReference type="jPOST" id="Q925F2"/>
<dbReference type="PaxDb" id="10090-ENSMUSP00000002011"/>
<dbReference type="ProteomicsDB" id="275781"/>
<dbReference type="ABCD" id="Q925F2">
    <property type="antibodies" value="42 sequenced antibodies"/>
</dbReference>
<dbReference type="Antibodypedia" id="32908">
    <property type="antibodies" value="488 antibodies from 31 providers"/>
</dbReference>
<dbReference type="DNASU" id="69524"/>
<dbReference type="Ensembl" id="ENSMUST00000002011.14">
    <property type="protein sequence ID" value="ENSMUSP00000002011.8"/>
    <property type="gene ID" value="ENSMUSG00000001946.15"/>
</dbReference>
<dbReference type="GeneID" id="69524"/>
<dbReference type="KEGG" id="mmu:69524"/>
<dbReference type="UCSC" id="uc009ouz.2">
    <property type="organism name" value="mouse"/>
</dbReference>
<dbReference type="AGR" id="MGI:1916774"/>
<dbReference type="CTD" id="90952"/>
<dbReference type="MGI" id="MGI:1916774">
    <property type="gene designation" value="Esam"/>
</dbReference>
<dbReference type="VEuPathDB" id="HostDB:ENSMUSG00000001946"/>
<dbReference type="eggNOG" id="ENOG502QRZ4">
    <property type="taxonomic scope" value="Eukaryota"/>
</dbReference>
<dbReference type="GeneTree" id="ENSGT00940000157231"/>
<dbReference type="HOGENOM" id="CLU_040549_3_1_1"/>
<dbReference type="InParanoid" id="Q925F2"/>
<dbReference type="OMA" id="VWANIQM"/>
<dbReference type="OrthoDB" id="10041737at2759"/>
<dbReference type="PhylomeDB" id="Q925F2"/>
<dbReference type="TreeFam" id="TF330875"/>
<dbReference type="Reactome" id="R-MMU-202733">
    <property type="pathway name" value="Cell surface interactions at the vascular wall"/>
</dbReference>
<dbReference type="BioGRID-ORCS" id="69524">
    <property type="hits" value="0 hits in 77 CRISPR screens"/>
</dbReference>
<dbReference type="PRO" id="PR:Q925F2"/>
<dbReference type="Proteomes" id="UP000000589">
    <property type="component" value="Chromosome 9"/>
</dbReference>
<dbReference type="RNAct" id="Q925F2">
    <property type="molecule type" value="protein"/>
</dbReference>
<dbReference type="Bgee" id="ENSMUSG00000001946">
    <property type="expression patterns" value="Expressed in brain blood vessel and 233 other cell types or tissues"/>
</dbReference>
<dbReference type="ExpressionAtlas" id="Q925F2">
    <property type="expression patterns" value="baseline and differential"/>
</dbReference>
<dbReference type="GO" id="GO:0005912">
    <property type="term" value="C:adherens junction"/>
    <property type="evidence" value="ECO:0000314"/>
    <property type="project" value="MGI"/>
</dbReference>
<dbReference type="GO" id="GO:0005923">
    <property type="term" value="C:bicellular tight junction"/>
    <property type="evidence" value="ECO:0000314"/>
    <property type="project" value="MGI"/>
</dbReference>
<dbReference type="GO" id="GO:0005886">
    <property type="term" value="C:plasma membrane"/>
    <property type="evidence" value="ECO:0000314"/>
    <property type="project" value="MGI"/>
</dbReference>
<dbReference type="GO" id="GO:0032991">
    <property type="term" value="C:protein-containing complex"/>
    <property type="evidence" value="ECO:0007669"/>
    <property type="project" value="Ensembl"/>
</dbReference>
<dbReference type="GO" id="GO:0098632">
    <property type="term" value="F:cell-cell adhesion mediator activity"/>
    <property type="evidence" value="ECO:0007669"/>
    <property type="project" value="Ensembl"/>
</dbReference>
<dbReference type="GO" id="GO:0070830">
    <property type="term" value="P:bicellular tight junction assembly"/>
    <property type="evidence" value="ECO:0007669"/>
    <property type="project" value="Ensembl"/>
</dbReference>
<dbReference type="GO" id="GO:0016338">
    <property type="term" value="P:calcium-independent cell-cell adhesion via plasma membrane cell-adhesion molecules"/>
    <property type="evidence" value="ECO:0000304"/>
    <property type="project" value="MGI"/>
</dbReference>
<dbReference type="GO" id="GO:0098609">
    <property type="term" value="P:cell-cell adhesion"/>
    <property type="evidence" value="ECO:0000314"/>
    <property type="project" value="MGI"/>
</dbReference>
<dbReference type="GO" id="GO:0007156">
    <property type="term" value="P:homophilic cell adhesion via plasma membrane adhesion molecules"/>
    <property type="evidence" value="ECO:0000314"/>
    <property type="project" value="MGI"/>
</dbReference>
<dbReference type="GO" id="GO:0008104">
    <property type="term" value="P:protein localization"/>
    <property type="evidence" value="ECO:0007669"/>
    <property type="project" value="Ensembl"/>
</dbReference>
<dbReference type="GO" id="GO:0030833">
    <property type="term" value="P:regulation of actin filament polymerization"/>
    <property type="evidence" value="ECO:0007669"/>
    <property type="project" value="Ensembl"/>
</dbReference>
<dbReference type="CDD" id="cd00096">
    <property type="entry name" value="Ig"/>
    <property type="match status" value="1"/>
</dbReference>
<dbReference type="FunFam" id="2.60.40.10:FF:000095">
    <property type="entry name" value="immunoglobulin superfamily member 11 isoform X1"/>
    <property type="match status" value="1"/>
</dbReference>
<dbReference type="Gene3D" id="2.60.40.10">
    <property type="entry name" value="Immunoglobulins"/>
    <property type="match status" value="2"/>
</dbReference>
<dbReference type="InterPro" id="IPR042757">
    <property type="entry name" value="ESAM"/>
</dbReference>
<dbReference type="InterPro" id="IPR007110">
    <property type="entry name" value="Ig-like_dom"/>
</dbReference>
<dbReference type="InterPro" id="IPR036179">
    <property type="entry name" value="Ig-like_dom_sf"/>
</dbReference>
<dbReference type="InterPro" id="IPR013783">
    <property type="entry name" value="Ig-like_fold"/>
</dbReference>
<dbReference type="InterPro" id="IPR003599">
    <property type="entry name" value="Ig_sub"/>
</dbReference>
<dbReference type="InterPro" id="IPR003598">
    <property type="entry name" value="Ig_sub2"/>
</dbReference>
<dbReference type="InterPro" id="IPR013106">
    <property type="entry name" value="Ig_V-set"/>
</dbReference>
<dbReference type="PANTHER" id="PTHR44549">
    <property type="entry name" value="ENDOTHELIAL CELL-SELECTIVE ADHESION MOLECULE"/>
    <property type="match status" value="1"/>
</dbReference>
<dbReference type="PANTHER" id="PTHR44549:SF1">
    <property type="entry name" value="ENDOTHELIAL CELL-SELECTIVE ADHESION MOLECULE"/>
    <property type="match status" value="1"/>
</dbReference>
<dbReference type="Pfam" id="PF13927">
    <property type="entry name" value="Ig_3"/>
    <property type="match status" value="1"/>
</dbReference>
<dbReference type="Pfam" id="PF07686">
    <property type="entry name" value="V-set"/>
    <property type="match status" value="1"/>
</dbReference>
<dbReference type="SMART" id="SM00409">
    <property type="entry name" value="IG"/>
    <property type="match status" value="2"/>
</dbReference>
<dbReference type="SMART" id="SM00408">
    <property type="entry name" value="IGc2"/>
    <property type="match status" value="1"/>
</dbReference>
<dbReference type="SUPFAM" id="SSF48726">
    <property type="entry name" value="Immunoglobulin"/>
    <property type="match status" value="2"/>
</dbReference>
<dbReference type="PROSITE" id="PS50835">
    <property type="entry name" value="IG_LIKE"/>
    <property type="match status" value="2"/>
</dbReference>
<accession>Q925F2</accession>
<gene>
    <name type="primary">Esam</name>
    <name type="synonym">Esam1</name>
</gene>
<organism>
    <name type="scientific">Mus musculus</name>
    <name type="common">Mouse</name>
    <dbReference type="NCBI Taxonomy" id="10090"/>
    <lineage>
        <taxon>Eukaryota</taxon>
        <taxon>Metazoa</taxon>
        <taxon>Chordata</taxon>
        <taxon>Craniata</taxon>
        <taxon>Vertebrata</taxon>
        <taxon>Euteleostomi</taxon>
        <taxon>Mammalia</taxon>
        <taxon>Eutheria</taxon>
        <taxon>Euarchontoglires</taxon>
        <taxon>Glires</taxon>
        <taxon>Rodentia</taxon>
        <taxon>Myomorpha</taxon>
        <taxon>Muroidea</taxon>
        <taxon>Muridae</taxon>
        <taxon>Murinae</taxon>
        <taxon>Mus</taxon>
        <taxon>Mus</taxon>
    </lineage>
</organism>
<feature type="signal peptide" evidence="1">
    <location>
        <begin position="1"/>
        <end position="29"/>
    </location>
</feature>
<feature type="chain" id="PRO_0000014754" description="Endothelial cell-selective adhesion molecule">
    <location>
        <begin position="30"/>
        <end position="394"/>
    </location>
</feature>
<feature type="topological domain" description="Extracellular" evidence="3">
    <location>
        <begin position="30"/>
        <end position="251"/>
    </location>
</feature>
<feature type="transmembrane region" description="Helical" evidence="3">
    <location>
        <begin position="252"/>
        <end position="272"/>
    </location>
</feature>
<feature type="topological domain" description="Cytoplasmic" evidence="3">
    <location>
        <begin position="273"/>
        <end position="394"/>
    </location>
</feature>
<feature type="domain" description="Ig-like V-type">
    <location>
        <begin position="37"/>
        <end position="146"/>
    </location>
</feature>
<feature type="domain" description="Ig-like C2-type">
    <location>
        <begin position="159"/>
        <end position="243"/>
    </location>
</feature>
<feature type="region of interest" description="Disordered" evidence="5">
    <location>
        <begin position="304"/>
        <end position="372"/>
    </location>
</feature>
<feature type="compositionally biased region" description="Polar residues" evidence="5">
    <location>
        <begin position="304"/>
        <end position="318"/>
    </location>
</feature>
<feature type="compositionally biased region" description="Polar residues" evidence="5">
    <location>
        <begin position="335"/>
        <end position="347"/>
    </location>
</feature>
<feature type="modified residue" description="Phosphoserine" evidence="10">
    <location>
        <position position="304"/>
    </location>
</feature>
<feature type="modified residue" description="Phosphothreonine" evidence="10">
    <location>
        <position position="336"/>
    </location>
</feature>
<feature type="modified residue" description="Phosphothreonine" evidence="10">
    <location>
        <position position="338"/>
    </location>
</feature>
<feature type="modified residue" description="Phosphoserine" evidence="10">
    <location>
        <position position="340"/>
    </location>
</feature>
<feature type="modified residue" description="Phosphoserine" evidence="10">
    <location>
        <position position="343"/>
    </location>
</feature>
<feature type="modified residue" description="Phosphoserine" evidence="10">
    <location>
        <position position="348"/>
    </location>
</feature>
<feature type="modified residue" description="Phosphoserine" evidence="10">
    <location>
        <position position="375"/>
    </location>
</feature>
<feature type="glycosylation site" description="N-linked (GlcNAc...) asparagine" evidence="3">
    <location>
        <position position="111"/>
    </location>
</feature>
<feature type="glycosylation site" description="N-linked (GlcNAc...) asparagine" evidence="3">
    <location>
        <position position="172"/>
    </location>
</feature>
<feature type="glycosylation site" description="N-linked (GlcNAc...) asparagine" evidence="3">
    <location>
        <position position="216"/>
    </location>
</feature>
<feature type="glycosylation site" description="N-linked (GlcNAc...) asparagine" evidence="3">
    <location>
        <position position="239"/>
    </location>
</feature>
<feature type="disulfide bond" evidence="4">
    <location>
        <begin position="177"/>
        <end position="227"/>
    </location>
</feature>
<keyword id="KW-0130">Cell adhesion</keyword>
<keyword id="KW-0965">Cell junction</keyword>
<keyword id="KW-1003">Cell membrane</keyword>
<keyword id="KW-1015">Disulfide bond</keyword>
<keyword id="KW-0325">Glycoprotein</keyword>
<keyword id="KW-0393">Immunoglobulin domain</keyword>
<keyword id="KW-0472">Membrane</keyword>
<keyword id="KW-0597">Phosphoprotein</keyword>
<keyword id="KW-1185">Reference proteome</keyword>
<keyword id="KW-0677">Repeat</keyword>
<keyword id="KW-0732">Signal</keyword>
<keyword id="KW-0796">Tight junction</keyword>
<keyword id="KW-0812">Transmembrane</keyword>
<keyword id="KW-1133">Transmembrane helix</keyword>
<name>ESAM_MOUSE</name>
<evidence type="ECO:0000250" key="1"/>
<evidence type="ECO:0000250" key="2">
    <source>
        <dbReference type="UniProtKB" id="Q96AP7"/>
    </source>
</evidence>
<evidence type="ECO:0000255" key="3"/>
<evidence type="ECO:0000255" key="4">
    <source>
        <dbReference type="PROSITE-ProRule" id="PRU00114"/>
    </source>
</evidence>
<evidence type="ECO:0000256" key="5">
    <source>
        <dbReference type="SAM" id="MobiDB-lite"/>
    </source>
</evidence>
<evidence type="ECO:0000269" key="6">
    <source>
    </source>
</evidence>
<evidence type="ECO:0000269" key="7">
    <source>
    </source>
</evidence>
<evidence type="ECO:0000269" key="8">
    <source>
    </source>
</evidence>
<evidence type="ECO:0000305" key="9"/>
<evidence type="ECO:0007744" key="10">
    <source>
    </source>
</evidence>
<comment type="function">
    <text evidence="6 7">Can mediate aggregation most likely through a homophilic molecular interaction.</text>
</comment>
<comment type="subunit">
    <text evidence="8">Interacts with MAGI1.</text>
</comment>
<comment type="subcellular location">
    <subcellularLocation>
        <location evidence="9">Cell junction</location>
        <location evidence="9">Adherens junction</location>
    </subcellularLocation>
    <subcellularLocation>
        <location evidence="9">Cell junction</location>
        <location evidence="9">Tight junction</location>
    </subcellularLocation>
    <subcellularLocation>
        <location evidence="2">Cell membrane</location>
        <topology evidence="9">Single-pass type I membrane protein</topology>
    </subcellularLocation>
</comment>
<comment type="tissue specificity">
    <text evidence="6 7">Highly expressed in the heart and lung. Weakly expressed in the kidney and skin. Expression is restricted to the vascular endothelial cells. Expressed in the kidney, heart and tongue (at protein level). Also expressed on megakaryocytes and activated platelets.</text>
</comment>
<comment type="developmental stage">
    <text evidence="6">Expression in 8.5 dpc-9.5 dpc embryos is observed in embryonic blood vessels including the dorsal aorta, intersomitic arteries and the forming vascular plexus in the head as well as the cardiac outflow tract. By 10.5 dpc-11.5 dpc embryos expression is found in association with the all recognizable blood vessels and in association with cells lining the heart chambers. At 10.5-days embryos expression is associated with syncytiotrophoblasts and cytotrophoblasts as well as endothelial cells associated with blood vessels in the decidua. Expression decreased after mid-gestation from 15.5-day embryos.</text>
</comment>
<comment type="induction">
    <text evidence="7">Up-regulated on the surface of platelets upon activation.</text>
</comment>
<reference key="1">
    <citation type="journal article" date="2001" name="J. Biol. Chem.">
        <title>Cloning of an immunoglobulin family adhesion molecule selectively expressed by endothelial cells.</title>
        <authorList>
            <person name="Hirata K."/>
            <person name="Ishida T."/>
            <person name="Penta K."/>
            <person name="Rezaee M."/>
            <person name="Yang E."/>
            <person name="Wohlgemuth J."/>
            <person name="Quertermous T."/>
        </authorList>
    </citation>
    <scope>NUCLEOTIDE SEQUENCE [MRNA]</scope>
    <scope>FUNCTION</scope>
    <scope>SUBCELLULAR LOCATION</scope>
    <scope>TISSUE SPECIFICITY</scope>
    <scope>DEVELOPMENTAL STAGE</scope>
    <source>
        <strain>Swiss Webster / NIH</strain>
    </source>
</reference>
<reference key="2">
    <citation type="journal article" date="2004" name="Genome Res.">
        <title>The status, quality, and expansion of the NIH full-length cDNA project: the Mammalian Gene Collection (MGC).</title>
        <authorList>
            <consortium name="The MGC Project Team"/>
        </authorList>
    </citation>
    <scope>NUCLEOTIDE SEQUENCE [LARGE SCALE MRNA]</scope>
    <source>
        <strain>FVB/N</strain>
        <tissue>Kidney</tissue>
    </source>
</reference>
<reference key="3">
    <citation type="journal article" date="2002" name="J. Biol. Chem.">
        <title>A transmembrane tight junction protein selectively expressed on endothelial cells and platelets.</title>
        <authorList>
            <person name="Nasdala I."/>
            <person name="Wolburg-Buchholz K."/>
            <person name="Wolburg H."/>
            <person name="Kuhn A."/>
            <person name="Ebnet K."/>
            <person name="Brachtendorf G."/>
            <person name="Samulowitz U."/>
            <person name="Kuster B."/>
            <person name="Engelhardt B."/>
            <person name="Vestweber D."/>
            <person name="Butz S."/>
        </authorList>
    </citation>
    <scope>FUNCTION</scope>
    <scope>SUBCELLULAR LOCATION</scope>
    <scope>TISSUE SPECIFICITY</scope>
    <scope>INDUCTION</scope>
</reference>
<reference key="4">
    <citation type="journal article" date="2004" name="Exp. Cell Res.">
        <title>Endothelial adhesion molecule ESAM binds directly to the multidomain adaptor MAGI-1 and recruits it to cell contacts.</title>
        <authorList>
            <person name="Wegmann F."/>
            <person name="Ebnet K."/>
            <person name="Du Pasquier L."/>
            <person name="Vestweber D."/>
            <person name="Butz S."/>
        </authorList>
    </citation>
    <scope>INTERACTION WITH MAGI1</scope>
</reference>
<reference key="5">
    <citation type="journal article" date="2004" name="Mol. Cell. Proteomics">
        <title>Phosphoproteomic analysis of the developing mouse brain.</title>
        <authorList>
            <person name="Ballif B.A."/>
            <person name="Villen J."/>
            <person name="Beausoleil S.A."/>
            <person name="Schwartz D."/>
            <person name="Gygi S.P."/>
        </authorList>
    </citation>
    <scope>IDENTIFICATION BY MASS SPECTROMETRY [LARGE SCALE ANALYSIS]</scope>
    <source>
        <tissue>Embryonic brain</tissue>
    </source>
</reference>
<reference key="6">
    <citation type="journal article" date="2010" name="Cell">
        <title>A tissue-specific atlas of mouse protein phosphorylation and expression.</title>
        <authorList>
            <person name="Huttlin E.L."/>
            <person name="Jedrychowski M.P."/>
            <person name="Elias J.E."/>
            <person name="Goswami T."/>
            <person name="Rad R."/>
            <person name="Beausoleil S.A."/>
            <person name="Villen J."/>
            <person name="Haas W."/>
            <person name="Sowa M.E."/>
            <person name="Gygi S.P."/>
        </authorList>
    </citation>
    <scope>PHOSPHORYLATION [LARGE SCALE ANALYSIS] AT SER-304; THR-336; THR-338; SER-340; SER-343; SER-348 AND SER-375</scope>
    <scope>IDENTIFICATION BY MASS SPECTROMETRY [LARGE SCALE ANALYSIS]</scope>
    <source>
        <tissue>Brain</tissue>
        <tissue>Brown adipose tissue</tissue>
        <tissue>Heart</tissue>
        <tissue>Kidney</tissue>
        <tissue>Lung</tissue>
        <tissue>Pancreas</tissue>
        <tissue>Spleen</tissue>
    </source>
</reference>
<proteinExistence type="evidence at protein level"/>